<dbReference type="EMBL" id="CP000390">
    <property type="protein sequence ID" value="ABG61824.1"/>
    <property type="molecule type" value="Genomic_DNA"/>
</dbReference>
<dbReference type="SMR" id="Q11LA1"/>
<dbReference type="STRING" id="266779.Meso_0420"/>
<dbReference type="KEGG" id="mes:Meso_0420"/>
<dbReference type="eggNOG" id="COG3705">
    <property type="taxonomic scope" value="Bacteria"/>
</dbReference>
<dbReference type="HOGENOM" id="CLU_025113_6_0_5"/>
<dbReference type="OrthoDB" id="9797914at2"/>
<dbReference type="UniPathway" id="UPA00031">
    <property type="reaction ID" value="UER00006"/>
</dbReference>
<dbReference type="GO" id="GO:0005737">
    <property type="term" value="C:cytoplasm"/>
    <property type="evidence" value="ECO:0007669"/>
    <property type="project" value="UniProtKB-SubCell"/>
</dbReference>
<dbReference type="GO" id="GO:0004821">
    <property type="term" value="F:histidine-tRNA ligase activity"/>
    <property type="evidence" value="ECO:0007669"/>
    <property type="project" value="TreeGrafter"/>
</dbReference>
<dbReference type="GO" id="GO:0006427">
    <property type="term" value="P:histidyl-tRNA aminoacylation"/>
    <property type="evidence" value="ECO:0007669"/>
    <property type="project" value="TreeGrafter"/>
</dbReference>
<dbReference type="GO" id="GO:0000105">
    <property type="term" value="P:L-histidine biosynthetic process"/>
    <property type="evidence" value="ECO:0007669"/>
    <property type="project" value="UniProtKB-UniRule"/>
</dbReference>
<dbReference type="Gene3D" id="3.30.930.10">
    <property type="entry name" value="Bira Bifunctional Protein, Domain 2"/>
    <property type="match status" value="1"/>
</dbReference>
<dbReference type="HAMAP" id="MF_00125">
    <property type="entry name" value="HisZ"/>
    <property type="match status" value="1"/>
</dbReference>
<dbReference type="InterPro" id="IPR045864">
    <property type="entry name" value="aa-tRNA-synth_II/BPL/LPL"/>
</dbReference>
<dbReference type="InterPro" id="IPR041715">
    <property type="entry name" value="HisRS-like_core"/>
</dbReference>
<dbReference type="InterPro" id="IPR004516">
    <property type="entry name" value="HisRS/HisZ"/>
</dbReference>
<dbReference type="InterPro" id="IPR004517">
    <property type="entry name" value="HisZ"/>
</dbReference>
<dbReference type="NCBIfam" id="NF008951">
    <property type="entry name" value="PRK12295.1-4"/>
    <property type="match status" value="1"/>
</dbReference>
<dbReference type="PANTHER" id="PTHR43707:SF1">
    <property type="entry name" value="HISTIDINE--TRNA LIGASE, MITOCHONDRIAL-RELATED"/>
    <property type="match status" value="1"/>
</dbReference>
<dbReference type="PANTHER" id="PTHR43707">
    <property type="entry name" value="HISTIDYL-TRNA SYNTHETASE"/>
    <property type="match status" value="1"/>
</dbReference>
<dbReference type="Pfam" id="PF13393">
    <property type="entry name" value="tRNA-synt_His"/>
    <property type="match status" value="2"/>
</dbReference>
<dbReference type="PIRSF" id="PIRSF001549">
    <property type="entry name" value="His-tRNA_synth"/>
    <property type="match status" value="1"/>
</dbReference>
<dbReference type="SUPFAM" id="SSF55681">
    <property type="entry name" value="Class II aaRS and biotin synthetases"/>
    <property type="match status" value="1"/>
</dbReference>
<name>HISZ_CHESB</name>
<protein>
    <recommendedName>
        <fullName evidence="1">ATP phosphoribosyltransferase regulatory subunit</fullName>
    </recommendedName>
</protein>
<evidence type="ECO:0000255" key="1">
    <source>
        <dbReference type="HAMAP-Rule" id="MF_00125"/>
    </source>
</evidence>
<proteinExistence type="inferred from homology"/>
<gene>
    <name evidence="1" type="primary">hisZ</name>
    <name type="ordered locus">Meso_0420</name>
</gene>
<keyword id="KW-0028">Amino-acid biosynthesis</keyword>
<keyword id="KW-0963">Cytoplasm</keyword>
<keyword id="KW-0368">Histidine biosynthesis</keyword>
<organism>
    <name type="scientific">Chelativorans sp. (strain BNC1)</name>
    <dbReference type="NCBI Taxonomy" id="266779"/>
    <lineage>
        <taxon>Bacteria</taxon>
        <taxon>Pseudomonadati</taxon>
        <taxon>Pseudomonadota</taxon>
        <taxon>Alphaproteobacteria</taxon>
        <taxon>Hyphomicrobiales</taxon>
        <taxon>Phyllobacteriaceae</taxon>
        <taxon>Chelativorans</taxon>
    </lineage>
</organism>
<comment type="function">
    <text evidence="1">Required for the first step of histidine biosynthesis. May allow the feedback regulation of ATP phosphoribosyltransferase activity by histidine.</text>
</comment>
<comment type="pathway">
    <text evidence="1">Amino-acid biosynthesis; L-histidine biosynthesis; L-histidine from 5-phospho-alpha-D-ribose 1-diphosphate: step 1/9.</text>
</comment>
<comment type="subunit">
    <text evidence="1">Heteromultimer composed of HisG and HisZ subunits.</text>
</comment>
<comment type="subcellular location">
    <subcellularLocation>
        <location evidence="1">Cytoplasm</location>
    </subcellularLocation>
</comment>
<comment type="miscellaneous">
    <text>This function is generally fulfilled by the C-terminal part of HisG, which is missing in some bacteria such as this one.</text>
</comment>
<comment type="similarity">
    <text evidence="1">Belongs to the class-II aminoacyl-tRNA synthetase family. HisZ subfamily.</text>
</comment>
<sequence>MTSRYPSFAAEILDLFAEREAVLTDIAIIQPADPFLDMAGEDLRRRIFLTESETGETLCLRPEFTIPVCLDHIEKRASTPRRYAYLGEVFRQHREGSPEFFQAGVEDLGAKDRPAADARSLADARAILSCVLPNTGFHVTLGDQAVFEAVLSALGLPRGWQKRLARAFGSPAMLEAAIAEFTSPQGTANLPREVASLVAQGNEQRLTHHIEEAMQAAGHSPTAGREPDEIARRLLEKAALRSVRLSDAALNALKSFLAIKVPLEQAGERLTAFADEAGIFLDEALADFSARAERIGDHALPLDEIRYDAGFGRPLDYYTGFIFEIGVEGLRQPLVGGGRYDRLLTLLGAEEPIPGVGFSMWLDRIATVRGEKP</sequence>
<reference key="1">
    <citation type="submission" date="2006-06" db="EMBL/GenBank/DDBJ databases">
        <title>Complete sequence of chromosome of Mesorhizobium sp. BNC1.</title>
        <authorList>
            <consortium name="US DOE Joint Genome Institute"/>
            <person name="Copeland A."/>
            <person name="Lucas S."/>
            <person name="Lapidus A."/>
            <person name="Barry K."/>
            <person name="Detter J.C."/>
            <person name="Glavina del Rio T."/>
            <person name="Hammon N."/>
            <person name="Israni S."/>
            <person name="Dalin E."/>
            <person name="Tice H."/>
            <person name="Pitluck S."/>
            <person name="Chertkov O."/>
            <person name="Brettin T."/>
            <person name="Bruce D."/>
            <person name="Han C."/>
            <person name="Tapia R."/>
            <person name="Gilna P."/>
            <person name="Schmutz J."/>
            <person name="Larimer F."/>
            <person name="Land M."/>
            <person name="Hauser L."/>
            <person name="Kyrpides N."/>
            <person name="Mikhailova N."/>
            <person name="Richardson P."/>
        </authorList>
    </citation>
    <scope>NUCLEOTIDE SEQUENCE [LARGE SCALE GENOMIC DNA]</scope>
    <source>
        <strain>BNC1</strain>
    </source>
</reference>
<feature type="chain" id="PRO_1000016269" description="ATP phosphoribosyltransferase regulatory subunit">
    <location>
        <begin position="1"/>
        <end position="373"/>
    </location>
</feature>
<accession>Q11LA1</accession>